<protein>
    <recommendedName>
        <fullName evidence="1">Small ribosomal subunit protein uS19</fullName>
    </recommendedName>
    <alternativeName>
        <fullName evidence="2">30S ribosomal protein S19</fullName>
    </alternativeName>
</protein>
<keyword id="KW-1185">Reference proteome</keyword>
<keyword id="KW-0687">Ribonucleoprotein</keyword>
<keyword id="KW-0689">Ribosomal protein</keyword>
<keyword id="KW-0694">RNA-binding</keyword>
<keyword id="KW-0699">rRNA-binding</keyword>
<proteinExistence type="inferred from homology"/>
<feature type="chain" id="PRO_1000051057" description="Small ribosomal subunit protein uS19">
    <location>
        <begin position="1"/>
        <end position="91"/>
    </location>
</feature>
<reference key="1">
    <citation type="submission" date="2006-12" db="EMBL/GenBank/DDBJ databases">
        <title>Complete sequence of Halorhodospira halophila SL1.</title>
        <authorList>
            <consortium name="US DOE Joint Genome Institute"/>
            <person name="Copeland A."/>
            <person name="Lucas S."/>
            <person name="Lapidus A."/>
            <person name="Barry K."/>
            <person name="Detter J.C."/>
            <person name="Glavina del Rio T."/>
            <person name="Hammon N."/>
            <person name="Israni S."/>
            <person name="Dalin E."/>
            <person name="Tice H."/>
            <person name="Pitluck S."/>
            <person name="Saunders E."/>
            <person name="Brettin T."/>
            <person name="Bruce D."/>
            <person name="Han C."/>
            <person name="Tapia R."/>
            <person name="Schmutz J."/>
            <person name="Larimer F."/>
            <person name="Land M."/>
            <person name="Hauser L."/>
            <person name="Kyrpides N."/>
            <person name="Mikhailova N."/>
            <person name="Hoff W."/>
            <person name="Richardson P."/>
        </authorList>
    </citation>
    <scope>NUCLEOTIDE SEQUENCE [LARGE SCALE GENOMIC DNA]</scope>
    <source>
        <strain>DSM 244 / SL1</strain>
    </source>
</reference>
<name>RS19_HALHL</name>
<sequence length="91" mass="10305">MPRSTKKGPFIDHHLLKKVEEANANNSKRPIKTWSRRSVVMPDMVGLTIAIHNGRQHVPVLINENMVGHKLGEFAVTRSFRGHAADKKSKR</sequence>
<evidence type="ECO:0000255" key="1">
    <source>
        <dbReference type="HAMAP-Rule" id="MF_00531"/>
    </source>
</evidence>
<evidence type="ECO:0000305" key="2"/>
<dbReference type="EMBL" id="CP000544">
    <property type="protein sequence ID" value="ABM61630.1"/>
    <property type="molecule type" value="Genomic_DNA"/>
</dbReference>
<dbReference type="RefSeq" id="WP_011813653.1">
    <property type="nucleotide sequence ID" value="NC_008789.1"/>
</dbReference>
<dbReference type="SMR" id="A1WVB8"/>
<dbReference type="STRING" id="349124.Hhal_0854"/>
<dbReference type="KEGG" id="hha:Hhal_0854"/>
<dbReference type="eggNOG" id="COG0185">
    <property type="taxonomic scope" value="Bacteria"/>
</dbReference>
<dbReference type="HOGENOM" id="CLU_144911_0_1_6"/>
<dbReference type="OrthoDB" id="9797833at2"/>
<dbReference type="Proteomes" id="UP000000647">
    <property type="component" value="Chromosome"/>
</dbReference>
<dbReference type="GO" id="GO:0005737">
    <property type="term" value="C:cytoplasm"/>
    <property type="evidence" value="ECO:0007669"/>
    <property type="project" value="UniProtKB-ARBA"/>
</dbReference>
<dbReference type="GO" id="GO:0015935">
    <property type="term" value="C:small ribosomal subunit"/>
    <property type="evidence" value="ECO:0007669"/>
    <property type="project" value="InterPro"/>
</dbReference>
<dbReference type="GO" id="GO:0019843">
    <property type="term" value="F:rRNA binding"/>
    <property type="evidence" value="ECO:0007669"/>
    <property type="project" value="UniProtKB-UniRule"/>
</dbReference>
<dbReference type="GO" id="GO:0003735">
    <property type="term" value="F:structural constituent of ribosome"/>
    <property type="evidence" value="ECO:0007669"/>
    <property type="project" value="InterPro"/>
</dbReference>
<dbReference type="GO" id="GO:0000028">
    <property type="term" value="P:ribosomal small subunit assembly"/>
    <property type="evidence" value="ECO:0007669"/>
    <property type="project" value="TreeGrafter"/>
</dbReference>
<dbReference type="GO" id="GO:0006412">
    <property type="term" value="P:translation"/>
    <property type="evidence" value="ECO:0007669"/>
    <property type="project" value="UniProtKB-UniRule"/>
</dbReference>
<dbReference type="FunFam" id="3.30.860.10:FF:000001">
    <property type="entry name" value="30S ribosomal protein S19"/>
    <property type="match status" value="1"/>
</dbReference>
<dbReference type="Gene3D" id="3.30.860.10">
    <property type="entry name" value="30s Ribosomal Protein S19, Chain A"/>
    <property type="match status" value="1"/>
</dbReference>
<dbReference type="HAMAP" id="MF_00531">
    <property type="entry name" value="Ribosomal_uS19"/>
    <property type="match status" value="1"/>
</dbReference>
<dbReference type="InterPro" id="IPR002222">
    <property type="entry name" value="Ribosomal_uS19"/>
</dbReference>
<dbReference type="InterPro" id="IPR005732">
    <property type="entry name" value="Ribosomal_uS19_bac-type"/>
</dbReference>
<dbReference type="InterPro" id="IPR020934">
    <property type="entry name" value="Ribosomal_uS19_CS"/>
</dbReference>
<dbReference type="InterPro" id="IPR023575">
    <property type="entry name" value="Ribosomal_uS19_SF"/>
</dbReference>
<dbReference type="NCBIfam" id="TIGR01050">
    <property type="entry name" value="rpsS_bact"/>
    <property type="match status" value="1"/>
</dbReference>
<dbReference type="PANTHER" id="PTHR11880">
    <property type="entry name" value="RIBOSOMAL PROTEIN S19P FAMILY MEMBER"/>
    <property type="match status" value="1"/>
</dbReference>
<dbReference type="PANTHER" id="PTHR11880:SF8">
    <property type="entry name" value="SMALL RIBOSOMAL SUBUNIT PROTEIN US19M"/>
    <property type="match status" value="1"/>
</dbReference>
<dbReference type="Pfam" id="PF00203">
    <property type="entry name" value="Ribosomal_S19"/>
    <property type="match status" value="1"/>
</dbReference>
<dbReference type="PIRSF" id="PIRSF002144">
    <property type="entry name" value="Ribosomal_S19"/>
    <property type="match status" value="1"/>
</dbReference>
<dbReference type="PRINTS" id="PR00975">
    <property type="entry name" value="RIBOSOMALS19"/>
</dbReference>
<dbReference type="SUPFAM" id="SSF54570">
    <property type="entry name" value="Ribosomal protein S19"/>
    <property type="match status" value="1"/>
</dbReference>
<dbReference type="PROSITE" id="PS00323">
    <property type="entry name" value="RIBOSOMAL_S19"/>
    <property type="match status" value="1"/>
</dbReference>
<comment type="function">
    <text evidence="1">Protein S19 forms a complex with S13 that binds strongly to the 16S ribosomal RNA.</text>
</comment>
<comment type="similarity">
    <text evidence="1">Belongs to the universal ribosomal protein uS19 family.</text>
</comment>
<organism>
    <name type="scientific">Halorhodospira halophila (strain DSM 244 / SL1)</name>
    <name type="common">Ectothiorhodospira halophila (strain DSM 244 / SL1)</name>
    <dbReference type="NCBI Taxonomy" id="349124"/>
    <lineage>
        <taxon>Bacteria</taxon>
        <taxon>Pseudomonadati</taxon>
        <taxon>Pseudomonadota</taxon>
        <taxon>Gammaproteobacteria</taxon>
        <taxon>Chromatiales</taxon>
        <taxon>Ectothiorhodospiraceae</taxon>
        <taxon>Halorhodospira</taxon>
    </lineage>
</organism>
<gene>
    <name evidence="1" type="primary">rpsS</name>
    <name type="ordered locus">Hhal_0854</name>
</gene>
<accession>A1WVB8</accession>